<keyword id="KW-0687">Ribonucleoprotein</keyword>
<keyword id="KW-0689">Ribosomal protein</keyword>
<keyword id="KW-0694">RNA-binding</keyword>
<keyword id="KW-0699">rRNA-binding</keyword>
<feature type="chain" id="PRO_0000244246" description="Large ribosomal subunit protein bL25">
    <location>
        <begin position="1"/>
        <end position="194"/>
    </location>
</feature>
<protein>
    <recommendedName>
        <fullName evidence="1">Large ribosomal subunit protein bL25</fullName>
    </recommendedName>
    <alternativeName>
        <fullName evidence="2">50S ribosomal protein L25</fullName>
    </alternativeName>
    <alternativeName>
        <fullName evidence="1">General stress protein CTC</fullName>
    </alternativeName>
</protein>
<dbReference type="EMBL" id="CP000088">
    <property type="protein sequence ID" value="AAZ54454.1"/>
    <property type="molecule type" value="Genomic_DNA"/>
</dbReference>
<dbReference type="RefSeq" id="WP_011290863.1">
    <property type="nucleotide sequence ID" value="NC_007333.1"/>
</dbReference>
<dbReference type="SMR" id="Q47SW3"/>
<dbReference type="STRING" id="269800.Tfu_0416"/>
<dbReference type="KEGG" id="tfu:Tfu_0416"/>
<dbReference type="eggNOG" id="COG1825">
    <property type="taxonomic scope" value="Bacteria"/>
</dbReference>
<dbReference type="HOGENOM" id="CLU_075939_1_0_11"/>
<dbReference type="OrthoDB" id="5242980at2"/>
<dbReference type="GO" id="GO:0022625">
    <property type="term" value="C:cytosolic large ribosomal subunit"/>
    <property type="evidence" value="ECO:0007669"/>
    <property type="project" value="TreeGrafter"/>
</dbReference>
<dbReference type="GO" id="GO:0008097">
    <property type="term" value="F:5S rRNA binding"/>
    <property type="evidence" value="ECO:0007669"/>
    <property type="project" value="InterPro"/>
</dbReference>
<dbReference type="GO" id="GO:0003735">
    <property type="term" value="F:structural constituent of ribosome"/>
    <property type="evidence" value="ECO:0007669"/>
    <property type="project" value="InterPro"/>
</dbReference>
<dbReference type="GO" id="GO:0006412">
    <property type="term" value="P:translation"/>
    <property type="evidence" value="ECO:0007669"/>
    <property type="project" value="UniProtKB-UniRule"/>
</dbReference>
<dbReference type="CDD" id="cd00495">
    <property type="entry name" value="Ribosomal_L25_TL5_CTC"/>
    <property type="match status" value="1"/>
</dbReference>
<dbReference type="Gene3D" id="2.170.120.20">
    <property type="entry name" value="Ribosomal protein L25, beta domain"/>
    <property type="match status" value="1"/>
</dbReference>
<dbReference type="Gene3D" id="2.40.240.10">
    <property type="entry name" value="Ribosomal Protein L25, Chain P"/>
    <property type="match status" value="1"/>
</dbReference>
<dbReference type="HAMAP" id="MF_01334">
    <property type="entry name" value="Ribosomal_bL25_CTC"/>
    <property type="match status" value="1"/>
</dbReference>
<dbReference type="InterPro" id="IPR020056">
    <property type="entry name" value="Rbsml_bL25/Gln-tRNA_synth_N"/>
</dbReference>
<dbReference type="InterPro" id="IPR011035">
    <property type="entry name" value="Ribosomal_bL25/Gln-tRNA_synth"/>
</dbReference>
<dbReference type="InterPro" id="IPR020057">
    <property type="entry name" value="Ribosomal_bL25_b-dom"/>
</dbReference>
<dbReference type="InterPro" id="IPR037121">
    <property type="entry name" value="Ribosomal_bL25_C"/>
</dbReference>
<dbReference type="InterPro" id="IPR001021">
    <property type="entry name" value="Ribosomal_bL25_long"/>
</dbReference>
<dbReference type="InterPro" id="IPR029751">
    <property type="entry name" value="Ribosomal_L25_dom"/>
</dbReference>
<dbReference type="InterPro" id="IPR020930">
    <property type="entry name" value="Ribosomal_uL5_bac-type"/>
</dbReference>
<dbReference type="NCBIfam" id="TIGR00731">
    <property type="entry name" value="bL25_bact_ctc"/>
    <property type="match status" value="1"/>
</dbReference>
<dbReference type="NCBIfam" id="NF004131">
    <property type="entry name" value="PRK05618.2-1"/>
    <property type="match status" value="1"/>
</dbReference>
<dbReference type="PANTHER" id="PTHR33284">
    <property type="entry name" value="RIBOSOMAL PROTEIN L25/GLN-TRNA SYNTHETASE, ANTI-CODON-BINDING DOMAIN-CONTAINING PROTEIN"/>
    <property type="match status" value="1"/>
</dbReference>
<dbReference type="PANTHER" id="PTHR33284:SF1">
    <property type="entry name" value="RIBOSOMAL PROTEIN L25_GLN-TRNA SYNTHETASE, ANTI-CODON-BINDING DOMAIN-CONTAINING PROTEIN"/>
    <property type="match status" value="1"/>
</dbReference>
<dbReference type="Pfam" id="PF01386">
    <property type="entry name" value="Ribosomal_L25p"/>
    <property type="match status" value="1"/>
</dbReference>
<dbReference type="Pfam" id="PF14693">
    <property type="entry name" value="Ribosomal_TL5_C"/>
    <property type="match status" value="1"/>
</dbReference>
<dbReference type="SUPFAM" id="SSF50715">
    <property type="entry name" value="Ribosomal protein L25-like"/>
    <property type="match status" value="1"/>
</dbReference>
<comment type="function">
    <text evidence="1">This is one of the proteins that binds to the 5S RNA in the ribosome where it forms part of the central protuberance.</text>
</comment>
<comment type="subunit">
    <text evidence="1">Part of the 50S ribosomal subunit; part of the 5S rRNA/L5/L18/L25 subcomplex. Contacts the 5S rRNA. Binds to the 5S rRNA independently of L5 and L18.</text>
</comment>
<comment type="similarity">
    <text evidence="1">Belongs to the bacterial ribosomal protein bL25 family. CTC subfamily.</text>
</comment>
<organism>
    <name type="scientific">Thermobifida fusca (strain YX)</name>
    <dbReference type="NCBI Taxonomy" id="269800"/>
    <lineage>
        <taxon>Bacteria</taxon>
        <taxon>Bacillati</taxon>
        <taxon>Actinomycetota</taxon>
        <taxon>Actinomycetes</taxon>
        <taxon>Streptosporangiales</taxon>
        <taxon>Nocardiopsidaceae</taxon>
        <taxon>Thermobifida</taxon>
    </lineage>
</organism>
<name>RL25_THEFY</name>
<evidence type="ECO:0000255" key="1">
    <source>
        <dbReference type="HAMAP-Rule" id="MF_01334"/>
    </source>
</evidence>
<evidence type="ECO:0000305" key="2"/>
<accession>Q47SW3</accession>
<gene>
    <name evidence="1" type="primary">rplY</name>
    <name evidence="1" type="synonym">ctc</name>
    <name type="ordered locus">Tfu_0416</name>
</gene>
<sequence>MSEVRIAAEPRTEFGKGAARRARRAGKVPAVLYGHGIAPRHINLPGHDLMLALKTPNVLLRLEGVDEKESLVLPKSVQRDPIKGFLEHVDLLVVQRGEKVVVEVPLLVKGEVGAGGVLNLEMAQAEVRAEATRIPEGIEVDVDGLPIGTNVTAGDLKLPEGVELAMDPETIVMSVVAEAAPEATEEEEEGEAAE</sequence>
<proteinExistence type="inferred from homology"/>
<reference key="1">
    <citation type="journal article" date="2007" name="J. Bacteriol.">
        <title>Genome sequence and analysis of the soil cellulolytic actinomycete Thermobifida fusca YX.</title>
        <authorList>
            <person name="Lykidis A."/>
            <person name="Mavromatis K."/>
            <person name="Ivanova N."/>
            <person name="Anderson I."/>
            <person name="Land M."/>
            <person name="DiBartolo G."/>
            <person name="Martinez M."/>
            <person name="Lapidus A."/>
            <person name="Lucas S."/>
            <person name="Copeland A."/>
            <person name="Richardson P."/>
            <person name="Wilson D.B."/>
            <person name="Kyrpides N."/>
        </authorList>
    </citation>
    <scope>NUCLEOTIDE SEQUENCE [LARGE SCALE GENOMIC DNA]</scope>
    <source>
        <strain>YX</strain>
    </source>
</reference>